<dbReference type="EMBL" id="CP000472">
    <property type="protein sequence ID" value="ACJ26907.1"/>
    <property type="molecule type" value="Genomic_DNA"/>
</dbReference>
<dbReference type="RefSeq" id="WP_020910291.1">
    <property type="nucleotide sequence ID" value="NC_011566.1"/>
</dbReference>
<dbReference type="SMR" id="B8CHB5"/>
<dbReference type="STRING" id="225849.swp_0060"/>
<dbReference type="KEGG" id="swp:swp_0060"/>
<dbReference type="eggNOG" id="COG2922">
    <property type="taxonomic scope" value="Bacteria"/>
</dbReference>
<dbReference type="HOGENOM" id="CLU_133242_0_0_6"/>
<dbReference type="OrthoDB" id="9788984at2"/>
<dbReference type="Proteomes" id="UP000000753">
    <property type="component" value="Chromosome"/>
</dbReference>
<dbReference type="HAMAP" id="MF_00598">
    <property type="entry name" value="Smg"/>
    <property type="match status" value="1"/>
</dbReference>
<dbReference type="InterPro" id="IPR007456">
    <property type="entry name" value="Smg"/>
</dbReference>
<dbReference type="NCBIfam" id="NF002897">
    <property type="entry name" value="PRK03430.1"/>
    <property type="match status" value="1"/>
</dbReference>
<dbReference type="PANTHER" id="PTHR38692">
    <property type="entry name" value="PROTEIN SMG"/>
    <property type="match status" value="1"/>
</dbReference>
<dbReference type="PANTHER" id="PTHR38692:SF1">
    <property type="entry name" value="PROTEIN SMG"/>
    <property type="match status" value="1"/>
</dbReference>
<dbReference type="Pfam" id="PF04361">
    <property type="entry name" value="DUF494"/>
    <property type="match status" value="1"/>
</dbReference>
<sequence>MFDILMYLFENYVHSEVEFLVDEDELTKELTRAGFHQAEIIKALTWLEGLAELQEAGTPYLCNHDQQSFRIYTKDELERIDVESRGFLLFLEQIKVLSVETREMVIDRVMQLDESSLNLDDLKWVILMVLFNAPGHESAYEQMEDLIFEQPDGRLHS</sequence>
<gene>
    <name evidence="1" type="primary">smg</name>
    <name type="ordered locus">swp_0060</name>
</gene>
<proteinExistence type="inferred from homology"/>
<reference key="1">
    <citation type="journal article" date="2008" name="PLoS ONE">
        <title>Environmental adaptation: genomic analysis of the piezotolerant and psychrotolerant deep-sea iron reducing bacterium Shewanella piezotolerans WP3.</title>
        <authorList>
            <person name="Wang F."/>
            <person name="Wang J."/>
            <person name="Jian H."/>
            <person name="Zhang B."/>
            <person name="Li S."/>
            <person name="Wang F."/>
            <person name="Zeng X."/>
            <person name="Gao L."/>
            <person name="Bartlett D.H."/>
            <person name="Yu J."/>
            <person name="Hu S."/>
            <person name="Xiao X."/>
        </authorList>
    </citation>
    <scope>NUCLEOTIDE SEQUENCE [LARGE SCALE GENOMIC DNA]</scope>
    <source>
        <strain>WP3 / JCM 13877</strain>
    </source>
</reference>
<name>SMG_SHEPW</name>
<protein>
    <recommendedName>
        <fullName evidence="1">Protein Smg homolog</fullName>
    </recommendedName>
</protein>
<accession>B8CHB5</accession>
<evidence type="ECO:0000255" key="1">
    <source>
        <dbReference type="HAMAP-Rule" id="MF_00598"/>
    </source>
</evidence>
<comment type="similarity">
    <text evidence="1">Belongs to the Smg family.</text>
</comment>
<feature type="chain" id="PRO_1000129905" description="Protein Smg homolog">
    <location>
        <begin position="1"/>
        <end position="157"/>
    </location>
</feature>
<organism>
    <name type="scientific">Shewanella piezotolerans (strain WP3 / JCM 13877)</name>
    <dbReference type="NCBI Taxonomy" id="225849"/>
    <lineage>
        <taxon>Bacteria</taxon>
        <taxon>Pseudomonadati</taxon>
        <taxon>Pseudomonadota</taxon>
        <taxon>Gammaproteobacteria</taxon>
        <taxon>Alteromonadales</taxon>
        <taxon>Shewanellaceae</taxon>
        <taxon>Shewanella</taxon>
    </lineage>
</organism>